<gene>
    <name evidence="6" type="primary">aasB</name>
    <name type="ORF">AN6103</name>
    <name type="ORF">ANIA_06103</name>
</gene>
<feature type="signal peptide" evidence="3">
    <location>
        <begin position="1"/>
        <end position="18"/>
    </location>
</feature>
<feature type="chain" id="PRO_5010538789" description="Lytic polysaccharide monooxygenase aasB" evidence="3">
    <location>
        <begin position="19"/>
        <end position="328"/>
    </location>
</feature>
<feature type="binding site" evidence="1">
    <location>
        <position position="19"/>
    </location>
    <ligand>
        <name>Cu(2+)</name>
        <dbReference type="ChEBI" id="CHEBI:29036"/>
    </ligand>
</feature>
<feature type="binding site" evidence="1">
    <location>
        <position position="109"/>
    </location>
    <ligand>
        <name>Cu(2+)</name>
        <dbReference type="ChEBI" id="CHEBI:29036"/>
    </ligand>
</feature>
<feature type="binding site" evidence="1">
    <location>
        <position position="242"/>
    </location>
    <ligand>
        <name>Cu(2+)</name>
        <dbReference type="ChEBI" id="CHEBI:29036"/>
    </ligand>
</feature>
<feature type="glycosylation site" description="N-linked (GlcNAc...) asparagine" evidence="4">
    <location>
        <position position="54"/>
    </location>
</feature>
<feature type="glycosylation site" description="N-linked (GlcNAc...) asparagine" evidence="4">
    <location>
        <position position="306"/>
    </location>
</feature>
<feature type="disulfide bond" evidence="1">
    <location>
        <begin position="40"/>
        <end position="43"/>
    </location>
</feature>
<feature type="disulfide bond" evidence="1">
    <location>
        <begin position="66"/>
        <end position="245"/>
    </location>
</feature>
<feature type="disulfide bond" evidence="1">
    <location>
        <begin position="102"/>
        <end position="203"/>
    </location>
</feature>
<feature type="disulfide bond" evidence="1">
    <location>
        <begin position="118"/>
        <end position="145"/>
    </location>
</feature>
<feature type="disulfide bond" evidence="1">
    <location>
        <begin position="153"/>
        <end position="161"/>
    </location>
</feature>
<feature type="disulfide bond" evidence="1">
    <location>
        <begin position="167"/>
        <end position="173"/>
    </location>
</feature>
<feature type="disulfide bond" evidence="1">
    <location>
        <begin position="181"/>
        <end position="192"/>
    </location>
</feature>
<organism>
    <name type="scientific">Emericella nidulans (strain FGSC A4 / ATCC 38163 / CBS 112.46 / NRRL 194 / M139)</name>
    <name type="common">Aspergillus nidulans</name>
    <dbReference type="NCBI Taxonomy" id="227321"/>
    <lineage>
        <taxon>Eukaryota</taxon>
        <taxon>Fungi</taxon>
        <taxon>Dikarya</taxon>
        <taxon>Ascomycota</taxon>
        <taxon>Pezizomycotina</taxon>
        <taxon>Eurotiomycetes</taxon>
        <taxon>Eurotiomycetidae</taxon>
        <taxon>Eurotiales</taxon>
        <taxon>Aspergillaceae</taxon>
        <taxon>Aspergillus</taxon>
        <taxon>Aspergillus subgen. Nidulantes</taxon>
    </lineage>
</organism>
<sequence>MKAFFAISASTLLATVHGHGYLTVPASRTRLGFEAGIDTCPECSILEPVDAWPNVTEAQVGRSGPCGYNARVSVDYNQPGDNWGNEPVVTYKAGDIVEVQWCVDNNGDHGGMFTYGICQDQELVDKFLDPDYLPTEEEKQAAEDCFLQGELKCGDVDGQECEYSPDCGEGEACYRNDWFTCNAFEADSDRGCQGVDGAELNSCKTTIAGGYTVTKKIKIPDYTSEHTLLRFRWNSFQTPQIYLHCADPTIEGGMEVRMRMIVMHGSFGVDTQHSFGHSFGFQGEGVYRAYRYIRGVAIIQMNLNINASLLPQPTLPIRGWSTRNIQHT</sequence>
<accession>Q5B027</accession>
<accession>C8V2K2</accession>
<keyword id="KW-0119">Carbohydrate metabolism</keyword>
<keyword id="KW-0186">Copper</keyword>
<keyword id="KW-1015">Disulfide bond</keyword>
<keyword id="KW-0325">Glycoprotein</keyword>
<keyword id="KW-0479">Metal-binding</keyword>
<keyword id="KW-0560">Oxidoreductase</keyword>
<keyword id="KW-0624">Polysaccharide degradation</keyword>
<keyword id="KW-1185">Reference proteome</keyword>
<keyword id="KW-0964">Secreted</keyword>
<keyword id="KW-0732">Signal</keyword>
<evidence type="ECO:0000250" key="1">
    <source>
        <dbReference type="UniProtKB" id="Q2U8Y3"/>
    </source>
</evidence>
<evidence type="ECO:0000250" key="2">
    <source>
        <dbReference type="UniProtKB" id="Q7SCE9"/>
    </source>
</evidence>
<evidence type="ECO:0000255" key="3"/>
<evidence type="ECO:0000255" key="4">
    <source>
        <dbReference type="PROSITE-ProRule" id="PRU00498"/>
    </source>
</evidence>
<evidence type="ECO:0000269" key="5">
    <source>
    </source>
</evidence>
<evidence type="ECO:0000303" key="6">
    <source>
    </source>
</evidence>
<evidence type="ECO:0000305" key="7"/>
<evidence type="ECO:0000305" key="8">
    <source>
    </source>
</evidence>
<comment type="function">
    <text evidence="5">Lytic polysaccharide monooxygenase involved in breakdown of granular resistant starch.</text>
</comment>
<comment type="catalytic activity">
    <reaction evidence="8">
        <text>starch + reduced acceptor + O2 = D-glucono-1,5-lactone-terminated malto-oligosaccharides + short-chain malto-oligosaccharides + acceptor + H2O.</text>
        <dbReference type="EC" id="1.14.99.55"/>
    </reaction>
</comment>
<comment type="cofactor">
    <cofactor evidence="2">
        <name>Cu(2+)</name>
        <dbReference type="ChEBI" id="CHEBI:29036"/>
    </cofactor>
    <text evidence="2">Binds 1 copper ion per subunit.</text>
</comment>
<comment type="subcellular location">
    <subcellularLocation>
        <location evidence="8">Secreted</location>
    </subcellularLocation>
</comment>
<comment type="disruption phenotype">
    <text evidence="5">Impairs degradation of resistant potato starch, but has limited impact on less-resistant wheat starch and no impact on processed solubilized starch.</text>
</comment>
<comment type="biotechnology">
    <text evidence="2">Starch-active PMOs provide an expanded perspective on studies of starch metabolism and may have potential in the food and starch-based biofuel industries.</text>
</comment>
<comment type="similarity">
    <text evidence="7">Belongs to the polysaccharide monooxygenase AA13 family.</text>
</comment>
<protein>
    <recommendedName>
        <fullName evidence="6">Lytic polysaccharide monooxygenase aasB</fullName>
        <shortName evidence="6">LPMO aasB</shortName>
        <ecNumber evidence="8">1.14.99.55</ecNumber>
    </recommendedName>
</protein>
<dbReference type="EC" id="1.14.99.55" evidence="8"/>
<dbReference type="EMBL" id="AACD01000104">
    <property type="protein sequence ID" value="EAA58078.1"/>
    <property type="molecule type" value="Genomic_DNA"/>
</dbReference>
<dbReference type="EMBL" id="BN001301">
    <property type="protein sequence ID" value="CBF70179.1"/>
    <property type="molecule type" value="Genomic_DNA"/>
</dbReference>
<dbReference type="RefSeq" id="XP_663707.1">
    <property type="nucleotide sequence ID" value="XM_658615.1"/>
</dbReference>
<dbReference type="SMR" id="Q5B027"/>
<dbReference type="EnsemblFungi" id="CBF70179">
    <property type="protein sequence ID" value="CBF70179"/>
    <property type="gene ID" value="ANIA_06103"/>
</dbReference>
<dbReference type="GeneID" id="2870778"/>
<dbReference type="KEGG" id="ani:ANIA_06103"/>
<dbReference type="VEuPathDB" id="FungiDB:AN6103"/>
<dbReference type="eggNOG" id="ENOG502QSJT">
    <property type="taxonomic scope" value="Eukaryota"/>
</dbReference>
<dbReference type="HOGENOM" id="CLU_073361_0_0_1"/>
<dbReference type="InParanoid" id="Q5B027"/>
<dbReference type="OMA" id="CPECTIV"/>
<dbReference type="OrthoDB" id="550577at2759"/>
<dbReference type="Proteomes" id="UP000000560">
    <property type="component" value="Chromosome I"/>
</dbReference>
<dbReference type="GO" id="GO:0005576">
    <property type="term" value="C:extracellular region"/>
    <property type="evidence" value="ECO:0007669"/>
    <property type="project" value="UniProtKB-SubCell"/>
</dbReference>
<dbReference type="GO" id="GO:0046872">
    <property type="term" value="F:metal ion binding"/>
    <property type="evidence" value="ECO:0007669"/>
    <property type="project" value="UniProtKB-KW"/>
</dbReference>
<dbReference type="GO" id="GO:0016491">
    <property type="term" value="F:oxidoreductase activity"/>
    <property type="evidence" value="ECO:0007669"/>
    <property type="project" value="UniProtKB-KW"/>
</dbReference>
<dbReference type="GO" id="GO:0000272">
    <property type="term" value="P:polysaccharide catabolic process"/>
    <property type="evidence" value="ECO:0007669"/>
    <property type="project" value="UniProtKB-KW"/>
</dbReference>
<dbReference type="InterPro" id="IPR004302">
    <property type="entry name" value="Cellulose/chitin-bd_N"/>
</dbReference>
<dbReference type="InterPro" id="IPR052282">
    <property type="entry name" value="Starch-active_LPMO"/>
</dbReference>
<dbReference type="PANTHER" id="PTHR36575">
    <property type="entry name" value="BINDING PROTEIN, PUTATIVE (AFU_ORTHOLOGUE AFUA_1G14430)-RELATED"/>
    <property type="match status" value="1"/>
</dbReference>
<dbReference type="PANTHER" id="PTHR36575:SF2">
    <property type="entry name" value="CHITIN-BINDING TYPE-4 DOMAIN-CONTAINING PROTEIN-RELATED"/>
    <property type="match status" value="1"/>
</dbReference>
<dbReference type="Pfam" id="PF03067">
    <property type="entry name" value="LPMO_10"/>
    <property type="match status" value="1"/>
</dbReference>
<proteinExistence type="inferred from homology"/>
<name>AASB_EMENI</name>
<reference key="1">
    <citation type="journal article" date="2005" name="Nature">
        <title>Sequencing of Aspergillus nidulans and comparative analysis with A. fumigatus and A. oryzae.</title>
        <authorList>
            <person name="Galagan J.E."/>
            <person name="Calvo S.E."/>
            <person name="Cuomo C."/>
            <person name="Ma L.-J."/>
            <person name="Wortman J.R."/>
            <person name="Batzoglou S."/>
            <person name="Lee S.-I."/>
            <person name="Bastuerkmen M."/>
            <person name="Spevak C.C."/>
            <person name="Clutterbuck J."/>
            <person name="Kapitonov V."/>
            <person name="Jurka J."/>
            <person name="Scazzocchio C."/>
            <person name="Farman M.L."/>
            <person name="Butler J."/>
            <person name="Purcell S."/>
            <person name="Harris S."/>
            <person name="Braus G.H."/>
            <person name="Draht O."/>
            <person name="Busch S."/>
            <person name="D'Enfert C."/>
            <person name="Bouchier C."/>
            <person name="Goldman G.H."/>
            <person name="Bell-Pedersen D."/>
            <person name="Griffiths-Jones S."/>
            <person name="Doonan J.H."/>
            <person name="Yu J."/>
            <person name="Vienken K."/>
            <person name="Pain A."/>
            <person name="Freitag M."/>
            <person name="Selker E.U."/>
            <person name="Archer D.B."/>
            <person name="Penalva M.A."/>
            <person name="Oakley B.R."/>
            <person name="Momany M."/>
            <person name="Tanaka T."/>
            <person name="Kumagai T."/>
            <person name="Asai K."/>
            <person name="Machida M."/>
            <person name="Nierman W.C."/>
            <person name="Denning D.W."/>
            <person name="Caddick M.X."/>
            <person name="Hynes M."/>
            <person name="Paoletti M."/>
            <person name="Fischer R."/>
            <person name="Miller B.L."/>
            <person name="Dyer P.S."/>
            <person name="Sachs M.S."/>
            <person name="Osmani S.A."/>
            <person name="Birren B.W."/>
        </authorList>
    </citation>
    <scope>NUCLEOTIDE SEQUENCE [LARGE SCALE GENOMIC DNA]</scope>
    <source>
        <strain>FGSC A4 / ATCC 38163 / CBS 112.46 / NRRL 194 / M139</strain>
    </source>
</reference>
<reference key="2">
    <citation type="journal article" date="2009" name="Fungal Genet. Biol.">
        <title>The 2008 update of the Aspergillus nidulans genome annotation: a community effort.</title>
        <authorList>
            <person name="Wortman J.R."/>
            <person name="Gilsenan J.M."/>
            <person name="Joardar V."/>
            <person name="Deegan J."/>
            <person name="Clutterbuck J."/>
            <person name="Andersen M.R."/>
            <person name="Archer D."/>
            <person name="Bencina M."/>
            <person name="Braus G."/>
            <person name="Coutinho P."/>
            <person name="von Dohren H."/>
            <person name="Doonan J."/>
            <person name="Driessen A.J."/>
            <person name="Durek P."/>
            <person name="Espeso E."/>
            <person name="Fekete E."/>
            <person name="Flipphi M."/>
            <person name="Estrada C.G."/>
            <person name="Geysens S."/>
            <person name="Goldman G."/>
            <person name="de Groot P.W."/>
            <person name="Hansen K."/>
            <person name="Harris S.D."/>
            <person name="Heinekamp T."/>
            <person name="Helmstaedt K."/>
            <person name="Henrissat B."/>
            <person name="Hofmann G."/>
            <person name="Homan T."/>
            <person name="Horio T."/>
            <person name="Horiuchi H."/>
            <person name="James S."/>
            <person name="Jones M."/>
            <person name="Karaffa L."/>
            <person name="Karanyi Z."/>
            <person name="Kato M."/>
            <person name="Keller N."/>
            <person name="Kelly D.E."/>
            <person name="Kiel J.A."/>
            <person name="Kim J.M."/>
            <person name="van der Klei I.J."/>
            <person name="Klis F.M."/>
            <person name="Kovalchuk A."/>
            <person name="Krasevec N."/>
            <person name="Kubicek C.P."/>
            <person name="Liu B."/>
            <person name="Maccabe A."/>
            <person name="Meyer V."/>
            <person name="Mirabito P."/>
            <person name="Miskei M."/>
            <person name="Mos M."/>
            <person name="Mullins J."/>
            <person name="Nelson D.R."/>
            <person name="Nielsen J."/>
            <person name="Oakley B.R."/>
            <person name="Osmani S.A."/>
            <person name="Pakula T."/>
            <person name="Paszewski A."/>
            <person name="Paulsen I."/>
            <person name="Pilsyk S."/>
            <person name="Pocsi I."/>
            <person name="Punt P.J."/>
            <person name="Ram A.F."/>
            <person name="Ren Q."/>
            <person name="Robellet X."/>
            <person name="Robson G."/>
            <person name="Seiboth B."/>
            <person name="van Solingen P."/>
            <person name="Specht T."/>
            <person name="Sun J."/>
            <person name="Taheri-Talesh N."/>
            <person name="Takeshita N."/>
            <person name="Ussery D."/>
            <person name="vanKuyk P.A."/>
            <person name="Visser H."/>
            <person name="van de Vondervoort P.J."/>
            <person name="de Vries R.P."/>
            <person name="Walton J."/>
            <person name="Xiang X."/>
            <person name="Xiong Y."/>
            <person name="Zeng A.P."/>
            <person name="Brandt B.W."/>
            <person name="Cornell M.J."/>
            <person name="van den Hondel C.A."/>
            <person name="Visser J."/>
            <person name="Oliver S.G."/>
            <person name="Turner G."/>
        </authorList>
    </citation>
    <scope>GENOME REANNOTATION</scope>
    <source>
        <strain>FGSC A4 / ATCC 38163 / CBS 112.46 / NRRL 194 / M139</strain>
    </source>
</reference>
<reference key="3">
    <citation type="journal article" date="2020" name="Biotechnol. Biofuels">
        <title>Loss of AA13 LPMOs impairs degradation of resistant starch and reduces the growth of Aspergillus nidulans.</title>
        <authorList>
            <person name="Haddad Momeni M."/>
            <person name="Leth M.L."/>
            <person name="Sternberg C."/>
            <person name="Schoof E."/>
            <person name="Nielsen M.W."/>
            <person name="Holck J."/>
            <person name="Workman C.T."/>
            <person name="Hoof J.B."/>
            <person name="Abou Hachem M."/>
        </authorList>
    </citation>
    <scope>FUNCTION</scope>
    <scope>DISRUPTION PHENOTYPE</scope>
</reference>